<feature type="chain" id="PRO_0000420019" description="Genome polyprotein">
    <location>
        <begin position="1"/>
        <end position="856"/>
    </location>
</feature>
<feature type="chain" id="PRO_0000040420" description="P1 proteinase" evidence="3">
    <location>
        <begin position="1"/>
        <end position="284"/>
    </location>
</feature>
<feature type="chain" id="PRO_0000040421" description="Helper component proteinase" evidence="3">
    <location>
        <begin position="285"/>
        <end position="740"/>
    </location>
</feature>
<feature type="chain" id="PRO_0000040422" description="Protein P3">
    <location>
        <begin position="741"/>
        <end position="856" status="greater than"/>
    </location>
</feature>
<feature type="domain" description="Peptidase S30" evidence="5">
    <location>
        <begin position="141"/>
        <end position="284"/>
    </location>
</feature>
<feature type="domain" description="Peptidase C6" evidence="4">
    <location>
        <begin position="618"/>
        <end position="740"/>
    </location>
</feature>
<feature type="short sequence motif" description="Involved in interaction with stylet and aphid transmission" evidence="1">
    <location>
        <begin position="334"/>
        <end position="337"/>
    </location>
</feature>
<feature type="short sequence motif" description="Involved in virions binding and aphid transmission" evidence="1">
    <location>
        <begin position="592"/>
        <end position="594"/>
    </location>
</feature>
<feature type="active site" description="For P1 proteinase activity" evidence="5">
    <location>
        <position position="192"/>
    </location>
</feature>
<feature type="active site" description="For P1 proteinase activity" evidence="5">
    <location>
        <position position="201"/>
    </location>
</feature>
<feature type="active site" description="For P1 proteinase activity" evidence="5">
    <location>
        <position position="235"/>
    </location>
</feature>
<feature type="active site" description="For helper component proteinase activity" evidence="4">
    <location>
        <position position="626"/>
    </location>
</feature>
<feature type="active site" description="For helper component proteinase activity" evidence="4">
    <location>
        <position position="699"/>
    </location>
</feature>
<feature type="site" description="Cleavage; by P1 proteinase" evidence="5">
    <location>
        <begin position="284"/>
        <end position="285"/>
    </location>
</feature>
<feature type="site" description="Cleavage; by autolysis" evidence="4">
    <location>
        <begin position="740"/>
        <end position="741"/>
    </location>
</feature>
<feature type="non-terminal residue">
    <location>
        <position position="856"/>
    </location>
</feature>
<sequence length="856" mass="96813">MATYMSTICFGSFECKLPYSPASCGHIVKEREVPASVDPFADLETQLSARLRKQEYATVRVLKNGTFTYRYKTDAQIMRIQKKLERKDREEYHFQMAAPSIVSKITIAGGDPPSKSEPQAPRGIIHTTPKVRKVKTRPIIKLTEGQMNHLIKQVKQIMSEKRGSVHLISKKTTHVQYKEILGATRAAVRTAHMMGLRRRVDFRCDTWTVGLLQRLARTDKWSNQVRTIHVRRGDSGVILNTKSLKGHFGRSSGDLFIVRGSHEGKLYDARSRVTQSVLNSMIQFSNADNFWKGLDGNWARMRYPSDHTCVAGLPVADCGRVAALTRHSILPCYKITCPTCAQQYASLPVSDLFKLLHKHARDGLNRLGADKDRFIHVNKFLMALEHLTEPVDLNLELFNEIFKSIGEKQQAPFKNLNVLNNFFLKGKENTAHEWQVAQLSLLELARFQKNRTDNIKKGDISFFRNKLSARANWNLYLSCDNQLDKNANFLWGQREYHAKRFFSNFFDEIDPAKGYSAYEIRKHPNGTRKLSIGNLVVPLDLAEFRQKMKGDYRKQPGVSRKCTSSKDGNYVYPCCCTTLDDGSAIESTFYPPTKKHLVIGNSGDQKFVDLPKGDSEMLYIAKQGYCYINVFLAMLINISEEDAKDFTKKVRDMCVPKLGTWPTMMDLATTCAQMRIFYPDVHDAELPRILVDHDTQTCHVVDSFGSQTTGYHILKASSVSQLILFANDELESDIKHYRVGGVPNACPELGSTISPFREGGVIMSESAALKLLLKGIFRPRVMRQLLLDEPYLLILSILSPGILMAMYNNGIFELAVRLWINEKQSIAMIASLLSALALRVSAAETLVAQRIIIDAA</sequence>
<protein>
    <recommendedName>
        <fullName>Genome polyprotein</fullName>
    </recommendedName>
    <component>
        <recommendedName>
            <fullName>P1 proteinase</fullName>
            <ecNumber evidence="2">3.4.-.-</ecNumber>
        </recommendedName>
        <alternativeName>
            <fullName>N-terminal protein</fullName>
        </alternativeName>
    </component>
    <component>
        <recommendedName>
            <fullName>Helper component proteinase</fullName>
            <shortName>HC-pro</shortName>
            <ecNumber evidence="2">3.4.22.45</ecNumber>
        </recommendedName>
    </component>
    <component>
        <recommendedName>
            <fullName>Protein P3</fullName>
        </recommendedName>
    </component>
</protein>
<dbReference type="EC" id="3.4.-.-" evidence="2"/>
<dbReference type="EC" id="3.4.22.45" evidence="2"/>
<dbReference type="EMBL" id="M37180">
    <property type="protein sequence ID" value="AAA47184.1"/>
    <property type="molecule type" value="Genomic_RNA"/>
</dbReference>
<dbReference type="PIR" id="A46341">
    <property type="entry name" value="A46341"/>
</dbReference>
<dbReference type="SMR" id="P22602"/>
<dbReference type="ABCD" id="P22602">
    <property type="antibodies" value="3 sequenced antibodies"/>
</dbReference>
<dbReference type="GO" id="GO:0004197">
    <property type="term" value="F:cysteine-type endopeptidase activity"/>
    <property type="evidence" value="ECO:0007669"/>
    <property type="project" value="InterPro"/>
</dbReference>
<dbReference type="GO" id="GO:0008236">
    <property type="term" value="F:serine-type peptidase activity"/>
    <property type="evidence" value="ECO:0007669"/>
    <property type="project" value="UniProtKB-KW"/>
</dbReference>
<dbReference type="GO" id="GO:0006508">
    <property type="term" value="P:proteolysis"/>
    <property type="evidence" value="ECO:0007669"/>
    <property type="project" value="UniProtKB-KW"/>
</dbReference>
<dbReference type="Gene3D" id="3.90.70.150">
    <property type="entry name" value="Helper component proteinase"/>
    <property type="match status" value="1"/>
</dbReference>
<dbReference type="InterPro" id="IPR001456">
    <property type="entry name" value="HC-pro"/>
</dbReference>
<dbReference type="InterPro" id="IPR031159">
    <property type="entry name" value="HC_PRO_CPD_dom"/>
</dbReference>
<dbReference type="InterPro" id="IPR042308">
    <property type="entry name" value="HC_PRO_CPD_sf"/>
</dbReference>
<dbReference type="InterPro" id="IPR002540">
    <property type="entry name" value="Pept_S30_P1_potyvir"/>
</dbReference>
<dbReference type="InterPro" id="IPR039560">
    <property type="entry name" value="Potyvirid-P3"/>
</dbReference>
<dbReference type="Pfam" id="PF00851">
    <property type="entry name" value="Peptidase_C6"/>
    <property type="match status" value="1"/>
</dbReference>
<dbReference type="Pfam" id="PF01577">
    <property type="entry name" value="Peptidase_S30"/>
    <property type="match status" value="1"/>
</dbReference>
<dbReference type="Pfam" id="PF13608">
    <property type="entry name" value="Potyvirid-P3"/>
    <property type="match status" value="1"/>
</dbReference>
<dbReference type="PROSITE" id="PS51744">
    <property type="entry name" value="HC_PRO_CPD"/>
    <property type="match status" value="1"/>
</dbReference>
<dbReference type="PROSITE" id="PS51871">
    <property type="entry name" value="PV_P1_PRO"/>
    <property type="match status" value="1"/>
</dbReference>
<name>POLG_PVYO</name>
<keyword id="KW-0378">Hydrolase</keyword>
<keyword id="KW-0645">Protease</keyword>
<keyword id="KW-0720">Serine protease</keyword>
<keyword id="KW-0788">Thiol protease</keyword>
<evidence type="ECO:0000250" key="1"/>
<evidence type="ECO:0000250" key="2">
    <source>
        <dbReference type="UniProtKB" id="P04517"/>
    </source>
</evidence>
<evidence type="ECO:0000255" key="3"/>
<evidence type="ECO:0000255" key="4">
    <source>
        <dbReference type="PROSITE-ProRule" id="PRU01080"/>
    </source>
</evidence>
<evidence type="ECO:0000255" key="5">
    <source>
        <dbReference type="PROSITE-ProRule" id="PRU01219"/>
    </source>
</evidence>
<evidence type="ECO:0000305" key="6"/>
<accession>P22602</accession>
<organism>
    <name type="scientific">Potato virus Y (strain O)</name>
    <name type="common">PVY</name>
    <dbReference type="NCBI Taxonomy" id="12220"/>
    <lineage>
        <taxon>Viruses</taxon>
        <taxon>Riboviria</taxon>
        <taxon>Orthornavirae</taxon>
        <taxon>Pisuviricota</taxon>
        <taxon>Stelpaviricetes</taxon>
        <taxon>Patatavirales</taxon>
        <taxon>Potyviridae</taxon>
        <taxon>Potyvirus</taxon>
        <taxon>Potyvirus yituberosi</taxon>
        <taxon>Potato virus Y</taxon>
    </lineage>
</organism>
<proteinExistence type="inferred from homology"/>
<reference key="1">
    <citation type="journal article" date="1990" name="Virology">
        <title>Comparative sequence of the helper component (HC) region of potato virus Y and a HC-defective strain, potato virus C.</title>
        <authorList>
            <person name="Thornbury D.W."/>
            <person name="Patterson C.A."/>
            <person name="Dessens J.T."/>
            <person name="Pirone T.P."/>
        </authorList>
    </citation>
    <scope>NUCLEOTIDE SEQUENCE [GENOMIC RNA]</scope>
</reference>
<reference key="2">
    <citation type="journal article" date="2001" name="Virus Res.">
        <title>Potyvirus proteins: a wealth of functions.</title>
        <authorList>
            <person name="Urcuqui-Inchima S."/>
            <person name="Haenni A.L."/>
            <person name="Bernardi F."/>
        </authorList>
    </citation>
    <scope>REVIEW</scope>
</reference>
<comment type="function">
    <molecule>Helper component proteinase</molecule>
    <text evidence="2">Required for aphid transmission and also has proteolytic activity. Only cleaves a Gly-Gly dipeptide at its own C-terminus. Interacts with virions and aphid stylets. Acts as a suppressor of RNA-mediated gene silencing, also known as post-transcriptional gene silencing (PTGS), a mechanism of plant viral defense that limits the accumulation of viral RNAs. May have RNA-binding activity.</text>
</comment>
<comment type="catalytic activity">
    <reaction evidence="2">
        <text>Hydrolyzes a Gly-|-Gly bond at its own C-terminus, commonly in the sequence -Tyr-Xaa-Val-Gly-|-Gly, in the processing of the potyviral polyprotein.</text>
        <dbReference type="EC" id="3.4.22.45"/>
    </reaction>
</comment>
<comment type="domain">
    <molecule>Helper component proteinase</molecule>
    <text>The N-terminus is involved in interaction with stylets. The central part is involved in interaction with virions and the C-terminus is involved in cell-to cell movement of the virus.</text>
</comment>
<comment type="PTM">
    <molecule>Genome polyprotein</molecule>
    <text evidence="1">Genome polyprotein of potyviruses undergoes post-translational proteolytic processing by the main proteinase NIa-pro resulting in the production of at least ten individual proteins. The P1 proteinase and the HC-pro cleave only their respective C-termini autocatalytically. 6K1 is essential for proper proteolytic separation of P3 from CI (By similarity).</text>
</comment>
<comment type="similarity">
    <text evidence="6">Belongs to the potyviridae genome polyprotein family.</text>
</comment>
<organismHost>
    <name type="scientific">Capsicum</name>
    <name type="common">peppers</name>
    <dbReference type="NCBI Taxonomy" id="4071"/>
</organismHost>
<organismHost>
    <name type="scientific">Nicotiana</name>
    <dbReference type="NCBI Taxonomy" id="4085"/>
</organismHost>
<organismHost>
    <name type="scientific">Solanum lycopersicum</name>
    <name type="common">Tomato</name>
    <name type="synonym">Lycopersicon esculentum</name>
    <dbReference type="NCBI Taxonomy" id="4081"/>
</organismHost>
<organismHost>
    <name type="scientific">Solanum tuberosum</name>
    <name type="common">Potato</name>
    <dbReference type="NCBI Taxonomy" id="4113"/>
</organismHost>